<reference key="1">
    <citation type="submission" date="2006-06" db="EMBL/GenBank/DDBJ databases">
        <title>Complete sequence of chromosome of Mesorhizobium sp. BNC1.</title>
        <authorList>
            <consortium name="US DOE Joint Genome Institute"/>
            <person name="Copeland A."/>
            <person name="Lucas S."/>
            <person name="Lapidus A."/>
            <person name="Barry K."/>
            <person name="Detter J.C."/>
            <person name="Glavina del Rio T."/>
            <person name="Hammon N."/>
            <person name="Israni S."/>
            <person name="Dalin E."/>
            <person name="Tice H."/>
            <person name="Pitluck S."/>
            <person name="Chertkov O."/>
            <person name="Brettin T."/>
            <person name="Bruce D."/>
            <person name="Han C."/>
            <person name="Tapia R."/>
            <person name="Gilna P."/>
            <person name="Schmutz J."/>
            <person name="Larimer F."/>
            <person name="Land M."/>
            <person name="Hauser L."/>
            <person name="Kyrpides N."/>
            <person name="Mikhailova N."/>
            <person name="Richardson P."/>
        </authorList>
    </citation>
    <scope>NUCLEOTIDE SEQUENCE [LARGE SCALE GENOMIC DNA]</scope>
    <source>
        <strain>BNC1</strain>
    </source>
</reference>
<feature type="chain" id="PRO_1000064072" description="2,3-bisphosphoglycerate-dependent phosphoglycerate mutase">
    <location>
        <begin position="1"/>
        <end position="206"/>
    </location>
</feature>
<feature type="active site" description="Tele-phosphohistidine intermediate" evidence="1">
    <location>
        <position position="10"/>
    </location>
</feature>
<feature type="active site" description="Proton donor/acceptor" evidence="1">
    <location>
        <position position="88"/>
    </location>
</feature>
<feature type="binding site" evidence="1">
    <location>
        <begin position="9"/>
        <end position="16"/>
    </location>
    <ligand>
        <name>substrate</name>
    </ligand>
</feature>
<feature type="binding site" evidence="1">
    <location>
        <begin position="22"/>
        <end position="23"/>
    </location>
    <ligand>
        <name>substrate</name>
    </ligand>
</feature>
<feature type="binding site" evidence="1">
    <location>
        <position position="61"/>
    </location>
    <ligand>
        <name>substrate</name>
    </ligand>
</feature>
<feature type="binding site" evidence="1">
    <location>
        <begin position="88"/>
        <end position="91"/>
    </location>
    <ligand>
        <name>substrate</name>
    </ligand>
</feature>
<feature type="binding site" evidence="1">
    <location>
        <position position="99"/>
    </location>
    <ligand>
        <name>substrate</name>
    </ligand>
</feature>
<feature type="binding site" evidence="1">
    <location>
        <begin position="115"/>
        <end position="116"/>
    </location>
    <ligand>
        <name>substrate</name>
    </ligand>
</feature>
<feature type="binding site" evidence="1">
    <location>
        <begin position="159"/>
        <end position="160"/>
    </location>
    <ligand>
        <name>substrate</name>
    </ligand>
</feature>
<feature type="site" description="Transition state stabilizer" evidence="1">
    <location>
        <position position="158"/>
    </location>
</feature>
<organism>
    <name type="scientific">Chelativorans sp. (strain BNC1)</name>
    <dbReference type="NCBI Taxonomy" id="266779"/>
    <lineage>
        <taxon>Bacteria</taxon>
        <taxon>Pseudomonadati</taxon>
        <taxon>Pseudomonadota</taxon>
        <taxon>Alphaproteobacteria</taxon>
        <taxon>Hyphomicrobiales</taxon>
        <taxon>Phyllobacteriaceae</taxon>
        <taxon>Chelativorans</taxon>
    </lineage>
</organism>
<gene>
    <name evidence="1" type="primary">gpmA</name>
    <name type="ordered locus">Meso_3591</name>
</gene>
<evidence type="ECO:0000255" key="1">
    <source>
        <dbReference type="HAMAP-Rule" id="MF_01039"/>
    </source>
</evidence>
<proteinExistence type="inferred from homology"/>
<accession>Q11CB5</accession>
<keyword id="KW-0312">Gluconeogenesis</keyword>
<keyword id="KW-0324">Glycolysis</keyword>
<keyword id="KW-0413">Isomerase</keyword>
<dbReference type="EC" id="5.4.2.11" evidence="1"/>
<dbReference type="EMBL" id="CP000390">
    <property type="protein sequence ID" value="ABG64960.1"/>
    <property type="molecule type" value="Genomic_DNA"/>
</dbReference>
<dbReference type="SMR" id="Q11CB5"/>
<dbReference type="STRING" id="266779.Meso_3591"/>
<dbReference type="KEGG" id="mes:Meso_3591"/>
<dbReference type="eggNOG" id="COG0588">
    <property type="taxonomic scope" value="Bacteria"/>
</dbReference>
<dbReference type="HOGENOM" id="CLU_033323_1_4_5"/>
<dbReference type="OrthoDB" id="9781415at2"/>
<dbReference type="UniPathway" id="UPA00109">
    <property type="reaction ID" value="UER00186"/>
</dbReference>
<dbReference type="GO" id="GO:0004619">
    <property type="term" value="F:phosphoglycerate mutase activity"/>
    <property type="evidence" value="ECO:0007669"/>
    <property type="project" value="UniProtKB-EC"/>
</dbReference>
<dbReference type="GO" id="GO:0006094">
    <property type="term" value="P:gluconeogenesis"/>
    <property type="evidence" value="ECO:0007669"/>
    <property type="project" value="UniProtKB-UniRule"/>
</dbReference>
<dbReference type="GO" id="GO:0006096">
    <property type="term" value="P:glycolytic process"/>
    <property type="evidence" value="ECO:0007669"/>
    <property type="project" value="UniProtKB-UniRule"/>
</dbReference>
<dbReference type="CDD" id="cd07067">
    <property type="entry name" value="HP_PGM_like"/>
    <property type="match status" value="1"/>
</dbReference>
<dbReference type="Gene3D" id="3.40.50.1240">
    <property type="entry name" value="Phosphoglycerate mutase-like"/>
    <property type="match status" value="1"/>
</dbReference>
<dbReference type="HAMAP" id="MF_01039">
    <property type="entry name" value="PGAM_GpmA"/>
    <property type="match status" value="1"/>
</dbReference>
<dbReference type="InterPro" id="IPR013078">
    <property type="entry name" value="His_Pase_superF_clade-1"/>
</dbReference>
<dbReference type="InterPro" id="IPR029033">
    <property type="entry name" value="His_PPase_superfam"/>
</dbReference>
<dbReference type="InterPro" id="IPR001345">
    <property type="entry name" value="PG/BPGM_mutase_AS"/>
</dbReference>
<dbReference type="InterPro" id="IPR005952">
    <property type="entry name" value="Phosphogly_mut1"/>
</dbReference>
<dbReference type="NCBIfam" id="TIGR01258">
    <property type="entry name" value="pgm_1"/>
    <property type="match status" value="1"/>
</dbReference>
<dbReference type="NCBIfam" id="NF002339">
    <property type="entry name" value="PRK01295.1"/>
    <property type="match status" value="1"/>
</dbReference>
<dbReference type="PANTHER" id="PTHR11931">
    <property type="entry name" value="PHOSPHOGLYCERATE MUTASE"/>
    <property type="match status" value="1"/>
</dbReference>
<dbReference type="Pfam" id="PF00300">
    <property type="entry name" value="His_Phos_1"/>
    <property type="match status" value="1"/>
</dbReference>
<dbReference type="PIRSF" id="PIRSF000709">
    <property type="entry name" value="6PFK_2-Ptase"/>
    <property type="match status" value="1"/>
</dbReference>
<dbReference type="SMART" id="SM00855">
    <property type="entry name" value="PGAM"/>
    <property type="match status" value="1"/>
</dbReference>
<dbReference type="SUPFAM" id="SSF53254">
    <property type="entry name" value="Phosphoglycerate mutase-like"/>
    <property type="match status" value="1"/>
</dbReference>
<dbReference type="PROSITE" id="PS00175">
    <property type="entry name" value="PG_MUTASE"/>
    <property type="match status" value="1"/>
</dbReference>
<name>GPMA_CHESB</name>
<comment type="function">
    <text evidence="1">Catalyzes the interconversion of 2-phosphoglycerate and 3-phosphoglycerate.</text>
</comment>
<comment type="catalytic activity">
    <reaction evidence="1">
        <text>(2R)-2-phosphoglycerate = (2R)-3-phosphoglycerate</text>
        <dbReference type="Rhea" id="RHEA:15901"/>
        <dbReference type="ChEBI" id="CHEBI:58272"/>
        <dbReference type="ChEBI" id="CHEBI:58289"/>
        <dbReference type="EC" id="5.4.2.11"/>
    </reaction>
</comment>
<comment type="pathway">
    <text evidence="1">Carbohydrate degradation; glycolysis; pyruvate from D-glyceraldehyde 3-phosphate: step 3/5.</text>
</comment>
<comment type="subunit">
    <text evidence="1">Homodimer.</text>
</comment>
<comment type="similarity">
    <text evidence="1">Belongs to the phosphoglycerate mutase family. BPG-dependent PGAM subfamily.</text>
</comment>
<sequence>MSGTLILVRHGQSEWNLKNLFTGWRDPGLSELGHEEATSAGRKIKDRGLRPDIAFTSVLSRAKVTNTHILEVLGLPALETIEDVALNERDYGDLSGLNKDDARKKWGEEQVHIWRRSYDIPPPGGESLRDTGARVWPYYLREILPQVLRGKTVLVSAHGNSLRSLAMVLDGLSGEEIVKMEIATGVPIVYRLNPDSTVASKEILEG</sequence>
<protein>
    <recommendedName>
        <fullName evidence="1">2,3-bisphosphoglycerate-dependent phosphoglycerate mutase</fullName>
        <shortName evidence="1">BPG-dependent PGAM</shortName>
        <shortName evidence="1">PGAM</shortName>
        <shortName evidence="1">Phosphoglyceromutase</shortName>
        <shortName evidence="1">dPGM</shortName>
        <ecNumber evidence="1">5.4.2.11</ecNumber>
    </recommendedName>
</protein>